<comment type="function">
    <text evidence="6 7 8">The TFIID basal transcription factor complex plays a major role in the initiation of RNA polymerase II (Pol II)-dependent transcription (PubMed:33795473). TFIID recognizes and binds promoters with or without a TATA box via its subunit TBP, a TATA-box-binding protein, and promotes assembly of the pre-initiation complex (PIC) (PubMed:33795473). The TFIID complex consists of TBP and TBP-associated factors (TAFs), including TAF1, TAF2, TAF3, TAF4, TAF5, TAF6, TAF7, TAF8, TAF9, TAF10, TAF11, TAF12 and TAF13 (PubMed:33795473, PubMed:9418870, PubMed:9774672). TAF2 forms a promoter DNA binding subcomplex of TFIID, together with TAF7 and TAF1 (PubMed:33795473, PubMed:9774672).</text>
</comment>
<comment type="subunit">
    <text evidence="2 6 7 8">Component of the TFIID basal transcription factor complex, composed of TATA-box-binding protein TBP, and a number of TBP-associated factors (TAFs), including TAF1, TAF2, TAF3, TAF4, TAF5, TAF6, TAF7, TAF8, TAF9, TAF10, TAF11, TAF12 and TAF13 (PubMed:33795473, PubMed:9774672). Interacts with TAF2C1 (PubMed:9418870). Component of the TFTC-HAT complex (PubMed:12601814).</text>
</comment>
<comment type="interaction">
    <interactant intactId="EBI-1560063">
        <id>Q6P1X5</id>
    </interactant>
    <interactant intactId="EBI-11529177">
        <id>Q9UHX1-2</id>
        <label>PUF60</label>
    </interactant>
    <organismsDiffer>false</organismsDiffer>
    <experiments>3</experiments>
</comment>
<comment type="subcellular location">
    <subcellularLocation>
        <location evidence="8">Nucleus</location>
    </subcellularLocation>
</comment>
<comment type="tissue specificity">
    <text evidence="8">Expressed in all tissues tested.</text>
</comment>
<comment type="disease" evidence="4 5">
    <disease id="DI-04004">
        <name>Neurodevelopmental disorder with feeding difficulties, thin corpus callosum, and foot deformity</name>
        <acronym>NEDFCF</acronym>
        <description>An autosomal recessive disorder characterized by impaired intellectual development, microcephaly, delayed psychomotor development, pyramidal signs, thin corpus callosum, and foot deformity.</description>
        <dbReference type="MIM" id="615599"/>
    </disease>
    <text>The disease is caused by variants affecting the gene represented in this entry.</text>
</comment>
<comment type="miscellaneous">
    <text>PubMed:9418870 was unable to show an association between TAF2 and TFIID.</text>
</comment>
<comment type="similarity">
    <text evidence="10">Belongs to the TAF2 family.</text>
</comment>
<comment type="sequence caution" evidence="10">
    <conflict type="erroneous initiation">
        <sequence resource="EMBL-CDS" id="AAC68502"/>
    </conflict>
    <text>Extended N-terminus.</text>
</comment>
<comment type="sequence caution" evidence="10">
    <conflict type="miscellaneous discrepancy">
        <sequence resource="EMBL-CDS" id="AAH64830"/>
    </conflict>
    <text>Contaminating sequence. Potential poly-A sequence.</text>
</comment>
<name>TAF2_HUMAN</name>
<keyword id="KW-0002">3D-structure</keyword>
<keyword id="KW-0225">Disease variant</keyword>
<keyword id="KW-0991">Intellectual disability</keyword>
<keyword id="KW-0539">Nucleus</keyword>
<keyword id="KW-0597">Phosphoprotein</keyword>
<keyword id="KW-1267">Proteomics identification</keyword>
<keyword id="KW-1185">Reference proteome</keyword>
<keyword id="KW-0804">Transcription</keyword>
<keyword id="KW-0805">Transcription regulation</keyword>
<reference key="1">
    <citation type="journal article" date="1998" name="Mol. Cell. Biol.">
        <title>CIF150, a human cofactor for transcription factor IID-dependent initiator function.</title>
        <authorList>
            <person name="Kaufmann J."/>
            <person name="Ahrens K."/>
            <person name="Koop R."/>
            <person name="Smale S.T."/>
            <person name="Muller R."/>
        </authorList>
    </citation>
    <scope>NUCLEOTIDE SEQUENCE [MRNA]</scope>
    <scope>VARIANT THR-447</scope>
    <scope>FUNCTION</scope>
    <scope>INTERACTION WITH TAF2C1</scope>
</reference>
<reference key="2">
    <citation type="journal article" date="1998" name="Mol. Cell. Biol.">
        <title>Novel cofactors and TFIIA mediate functional core promoter selectivity by the human TAFII150-containing TFIID complex.</title>
        <authorList>
            <person name="Martinez E."/>
            <person name="Ge H."/>
            <person name="Tao Y."/>
            <person name="Yuan C.-X."/>
            <person name="Palhan V."/>
            <person name="Roeder R.G."/>
        </authorList>
    </citation>
    <scope>NUCLEOTIDE SEQUENCE [MRNA]</scope>
    <scope>VARIANT THR-447</scope>
    <scope>FUNCTION</scope>
    <scope>SUBCELLULAR LOCATION</scope>
    <scope>IDENTIFICATION IN THE TFIID COMPLEX</scope>
    <scope>TISSUE SPECIFICITY</scope>
    <source>
        <tissue>Cervix carcinoma</tissue>
    </source>
</reference>
<reference key="3">
    <citation type="submission" date="1998-04" db="EMBL/GenBank/DDBJ databases">
        <title>Human TBP-associated factor (TAFII150).</title>
        <authorList>
            <person name="Guermah M."/>
            <person name="Roeder R.G.R."/>
        </authorList>
    </citation>
    <scope>NUCLEOTIDE SEQUENCE [MRNA]</scope>
    <scope>VARIANT THR-447</scope>
    <source>
        <tissue>Cervix carcinoma</tissue>
    </source>
</reference>
<reference key="4">
    <citation type="journal article" date="2004" name="Nat. Genet.">
        <title>Complete sequencing and characterization of 21,243 full-length human cDNAs.</title>
        <authorList>
            <person name="Ota T."/>
            <person name="Suzuki Y."/>
            <person name="Nishikawa T."/>
            <person name="Otsuki T."/>
            <person name="Sugiyama T."/>
            <person name="Irie R."/>
            <person name="Wakamatsu A."/>
            <person name="Hayashi K."/>
            <person name="Sato H."/>
            <person name="Nagai K."/>
            <person name="Kimura K."/>
            <person name="Makita H."/>
            <person name="Sekine M."/>
            <person name="Obayashi M."/>
            <person name="Nishi T."/>
            <person name="Shibahara T."/>
            <person name="Tanaka T."/>
            <person name="Ishii S."/>
            <person name="Yamamoto J."/>
            <person name="Saito K."/>
            <person name="Kawai Y."/>
            <person name="Isono Y."/>
            <person name="Nakamura Y."/>
            <person name="Nagahari K."/>
            <person name="Murakami K."/>
            <person name="Yasuda T."/>
            <person name="Iwayanagi T."/>
            <person name="Wagatsuma M."/>
            <person name="Shiratori A."/>
            <person name="Sudo H."/>
            <person name="Hosoiri T."/>
            <person name="Kaku Y."/>
            <person name="Kodaira H."/>
            <person name="Kondo H."/>
            <person name="Sugawara M."/>
            <person name="Takahashi M."/>
            <person name="Kanda K."/>
            <person name="Yokoi T."/>
            <person name="Furuya T."/>
            <person name="Kikkawa E."/>
            <person name="Omura Y."/>
            <person name="Abe K."/>
            <person name="Kamihara K."/>
            <person name="Katsuta N."/>
            <person name="Sato K."/>
            <person name="Tanikawa M."/>
            <person name="Yamazaki M."/>
            <person name="Ninomiya K."/>
            <person name="Ishibashi T."/>
            <person name="Yamashita H."/>
            <person name="Murakawa K."/>
            <person name="Fujimori K."/>
            <person name="Tanai H."/>
            <person name="Kimata M."/>
            <person name="Watanabe M."/>
            <person name="Hiraoka S."/>
            <person name="Chiba Y."/>
            <person name="Ishida S."/>
            <person name="Ono Y."/>
            <person name="Takiguchi S."/>
            <person name="Watanabe S."/>
            <person name="Yosida M."/>
            <person name="Hotuta T."/>
            <person name="Kusano J."/>
            <person name="Kanehori K."/>
            <person name="Takahashi-Fujii A."/>
            <person name="Hara H."/>
            <person name="Tanase T.-O."/>
            <person name="Nomura Y."/>
            <person name="Togiya S."/>
            <person name="Komai F."/>
            <person name="Hara R."/>
            <person name="Takeuchi K."/>
            <person name="Arita M."/>
            <person name="Imose N."/>
            <person name="Musashino K."/>
            <person name="Yuuki H."/>
            <person name="Oshima A."/>
            <person name="Sasaki N."/>
            <person name="Aotsuka S."/>
            <person name="Yoshikawa Y."/>
            <person name="Matsunawa H."/>
            <person name="Ichihara T."/>
            <person name="Shiohata N."/>
            <person name="Sano S."/>
            <person name="Moriya S."/>
            <person name="Momiyama H."/>
            <person name="Satoh N."/>
            <person name="Takami S."/>
            <person name="Terashima Y."/>
            <person name="Suzuki O."/>
            <person name="Nakagawa S."/>
            <person name="Senoh A."/>
            <person name="Mizoguchi H."/>
            <person name="Goto Y."/>
            <person name="Shimizu F."/>
            <person name="Wakebe H."/>
            <person name="Hishigaki H."/>
            <person name="Watanabe T."/>
            <person name="Sugiyama A."/>
            <person name="Takemoto M."/>
            <person name="Kawakami B."/>
            <person name="Yamazaki M."/>
            <person name="Watanabe K."/>
            <person name="Kumagai A."/>
            <person name="Itakura S."/>
            <person name="Fukuzumi Y."/>
            <person name="Fujimori Y."/>
            <person name="Komiyama M."/>
            <person name="Tashiro H."/>
            <person name="Tanigami A."/>
            <person name="Fujiwara T."/>
            <person name="Ono T."/>
            <person name="Yamada K."/>
            <person name="Fujii Y."/>
            <person name="Ozaki K."/>
            <person name="Hirao M."/>
            <person name="Ohmori Y."/>
            <person name="Kawabata A."/>
            <person name="Hikiji T."/>
            <person name="Kobatake N."/>
            <person name="Inagaki H."/>
            <person name="Ikema Y."/>
            <person name="Okamoto S."/>
            <person name="Okitani R."/>
            <person name="Kawakami T."/>
            <person name="Noguchi S."/>
            <person name="Itoh T."/>
            <person name="Shigeta K."/>
            <person name="Senba T."/>
            <person name="Matsumura K."/>
            <person name="Nakajima Y."/>
            <person name="Mizuno T."/>
            <person name="Morinaga M."/>
            <person name="Sasaki M."/>
            <person name="Togashi T."/>
            <person name="Oyama M."/>
            <person name="Hata H."/>
            <person name="Watanabe M."/>
            <person name="Komatsu T."/>
            <person name="Mizushima-Sugano J."/>
            <person name="Satoh T."/>
            <person name="Shirai Y."/>
            <person name="Takahashi Y."/>
            <person name="Nakagawa K."/>
            <person name="Okumura K."/>
            <person name="Nagase T."/>
            <person name="Nomura N."/>
            <person name="Kikuchi H."/>
            <person name="Masuho Y."/>
            <person name="Yamashita R."/>
            <person name="Nakai K."/>
            <person name="Yada T."/>
            <person name="Nakamura Y."/>
            <person name="Ohara O."/>
            <person name="Isogai T."/>
            <person name="Sugano S."/>
        </authorList>
    </citation>
    <scope>NUCLEOTIDE SEQUENCE [LARGE SCALE MRNA]</scope>
    <source>
        <tissue>Trachea</tissue>
    </source>
</reference>
<reference key="5">
    <citation type="journal article" date="2006" name="Nature">
        <title>DNA sequence and analysis of human chromosome 8.</title>
        <authorList>
            <person name="Nusbaum C."/>
            <person name="Mikkelsen T.S."/>
            <person name="Zody M.C."/>
            <person name="Asakawa S."/>
            <person name="Taudien S."/>
            <person name="Garber M."/>
            <person name="Kodira C.D."/>
            <person name="Schueler M.G."/>
            <person name="Shimizu A."/>
            <person name="Whittaker C.A."/>
            <person name="Chang J.L."/>
            <person name="Cuomo C.A."/>
            <person name="Dewar K."/>
            <person name="FitzGerald M.G."/>
            <person name="Yang X."/>
            <person name="Allen N.R."/>
            <person name="Anderson S."/>
            <person name="Asakawa T."/>
            <person name="Blechschmidt K."/>
            <person name="Bloom T."/>
            <person name="Borowsky M.L."/>
            <person name="Butler J."/>
            <person name="Cook A."/>
            <person name="Corum B."/>
            <person name="DeArellano K."/>
            <person name="DeCaprio D."/>
            <person name="Dooley K.T."/>
            <person name="Dorris L. III"/>
            <person name="Engels R."/>
            <person name="Gloeckner G."/>
            <person name="Hafez N."/>
            <person name="Hagopian D.S."/>
            <person name="Hall J.L."/>
            <person name="Ishikawa S.K."/>
            <person name="Jaffe D.B."/>
            <person name="Kamat A."/>
            <person name="Kudoh J."/>
            <person name="Lehmann R."/>
            <person name="Lokitsang T."/>
            <person name="Macdonald P."/>
            <person name="Major J.E."/>
            <person name="Matthews C.D."/>
            <person name="Mauceli E."/>
            <person name="Menzel U."/>
            <person name="Mihalev A.H."/>
            <person name="Minoshima S."/>
            <person name="Murayama Y."/>
            <person name="Naylor J.W."/>
            <person name="Nicol R."/>
            <person name="Nguyen C."/>
            <person name="O'Leary S.B."/>
            <person name="O'Neill K."/>
            <person name="Parker S.C.J."/>
            <person name="Polley A."/>
            <person name="Raymond C.K."/>
            <person name="Reichwald K."/>
            <person name="Rodriguez J."/>
            <person name="Sasaki T."/>
            <person name="Schilhabel M."/>
            <person name="Siddiqui R."/>
            <person name="Smith C.L."/>
            <person name="Sneddon T.P."/>
            <person name="Talamas J.A."/>
            <person name="Tenzin P."/>
            <person name="Topham K."/>
            <person name="Venkataraman V."/>
            <person name="Wen G."/>
            <person name="Yamazaki S."/>
            <person name="Young S.K."/>
            <person name="Zeng Q."/>
            <person name="Zimmer A.R."/>
            <person name="Rosenthal A."/>
            <person name="Birren B.W."/>
            <person name="Platzer M."/>
            <person name="Shimizu N."/>
            <person name="Lander E.S."/>
        </authorList>
    </citation>
    <scope>NUCLEOTIDE SEQUENCE [LARGE SCALE GENOMIC DNA]</scope>
</reference>
<reference key="6">
    <citation type="journal article" date="2004" name="Genome Res.">
        <title>The status, quality, and expansion of the NIH full-length cDNA project: the Mammalian Gene Collection (MGC).</title>
        <authorList>
            <consortium name="The MGC Project Team"/>
        </authorList>
    </citation>
    <scope>NUCLEOTIDE SEQUENCE [LARGE SCALE MRNA] OF 1-604</scope>
    <scope>VARIANT THR-447</scope>
    <source>
        <tissue>Duodenum</tissue>
        <tissue>Uterus</tissue>
    </source>
</reference>
<reference key="7">
    <citation type="journal article" date="2003" name="Proteomics">
        <title>Novel subunits of the TATA binding protein free TAFII-containing transcription complex identified by matrix-assisted laser desorption/ionization-time of flight mass spectrometry following one-dimensional gel electrophoresis.</title>
        <authorList>
            <person name="Cavusoglu N."/>
            <person name="Brand M."/>
            <person name="Tora L."/>
            <person name="van Dorsselaer A."/>
        </authorList>
    </citation>
    <scope>IDENTIFICATION IN THE TFTC-HAT COMPLEX</scope>
    <scope>IDENTIFICATION BY MASS SPECTROMETRY</scope>
</reference>
<reference key="8">
    <citation type="journal article" date="2008" name="Proc. Natl. Acad. Sci. U.S.A.">
        <title>A quantitative atlas of mitotic phosphorylation.</title>
        <authorList>
            <person name="Dephoure N."/>
            <person name="Zhou C."/>
            <person name="Villen J."/>
            <person name="Beausoleil S.A."/>
            <person name="Bakalarski C.E."/>
            <person name="Elledge S.J."/>
            <person name="Gygi S.P."/>
        </authorList>
    </citation>
    <scope>PHOSPHORYLATION [LARGE SCALE ANALYSIS] AT SER-1194; SER-1196 AND SER-1198</scope>
    <scope>IDENTIFICATION BY MASS SPECTROMETRY [LARGE SCALE ANALYSIS]</scope>
    <source>
        <tissue>Cervix carcinoma</tissue>
    </source>
</reference>
<reference key="9">
    <citation type="journal article" date="2010" name="Sci. Signal.">
        <title>Quantitative phosphoproteomics reveals widespread full phosphorylation site occupancy during mitosis.</title>
        <authorList>
            <person name="Olsen J.V."/>
            <person name="Vermeulen M."/>
            <person name="Santamaria A."/>
            <person name="Kumar C."/>
            <person name="Miller M.L."/>
            <person name="Jensen L.J."/>
            <person name="Gnad F."/>
            <person name="Cox J."/>
            <person name="Jensen T.S."/>
            <person name="Nigg E.A."/>
            <person name="Brunak S."/>
            <person name="Mann M."/>
        </authorList>
    </citation>
    <scope>PHOSPHORYLATION [LARGE SCALE ANALYSIS] AT SER-1185 AND SER-1188</scope>
    <scope>IDENTIFICATION BY MASS SPECTROMETRY [LARGE SCALE ANALYSIS]</scope>
    <source>
        <tissue>Cervix carcinoma</tissue>
    </source>
</reference>
<reference key="10">
    <citation type="journal article" date="2013" name="J. Proteome Res.">
        <title>Toward a comprehensive characterization of a human cancer cell phosphoproteome.</title>
        <authorList>
            <person name="Zhou H."/>
            <person name="Di Palma S."/>
            <person name="Preisinger C."/>
            <person name="Peng M."/>
            <person name="Polat A.N."/>
            <person name="Heck A.J."/>
            <person name="Mohammed S."/>
        </authorList>
    </citation>
    <scope>PHOSPHORYLATION [LARGE SCALE ANALYSIS] AT SER-1185 AND SER-1188</scope>
    <scope>IDENTIFICATION BY MASS SPECTROMETRY [LARGE SCALE ANALYSIS]</scope>
    <source>
        <tissue>Cervix carcinoma</tissue>
        <tissue>Erythroleukemia</tissue>
    </source>
</reference>
<reference evidence="11 12 13 14 15 16 17 18 19 20" key="11">
    <citation type="journal article" date="2021" name="Science">
        <title>Structural insights into preinitiation complex assembly on core promoters.</title>
        <authorList>
            <person name="Chen X."/>
            <person name="Qi Y."/>
            <person name="Wu Z."/>
            <person name="Wang X."/>
            <person name="Li J."/>
            <person name="Zhao D."/>
            <person name="Hou H."/>
            <person name="Li Y."/>
            <person name="Yu Z."/>
            <person name="Liu W."/>
            <person name="Wang M."/>
            <person name="Ren Y."/>
            <person name="Li Z."/>
            <person name="Yang H."/>
            <person name="Xu Y."/>
        </authorList>
    </citation>
    <scope>STRUCTURE BY ELECTRON MICROSCOPY (3.04 ANGSTROMS)</scope>
    <scope>FUNCTION</scope>
    <scope>IDENTIFICATION IN THE TFIID COMPLEX</scope>
    <scope>SUBUNIT</scope>
</reference>
<reference key="12">
    <citation type="journal article" date="2011" name="Nature">
        <title>Deep sequencing reveals 50 novel genes for recessive cognitive disorders.</title>
        <authorList>
            <person name="Najmabadi H."/>
            <person name="Hu H."/>
            <person name="Garshasbi M."/>
            <person name="Zemojtel T."/>
            <person name="Abedini S.S."/>
            <person name="Chen W."/>
            <person name="Hosseini M."/>
            <person name="Behjati F."/>
            <person name="Haas S."/>
            <person name="Jamali P."/>
            <person name="Zecha A."/>
            <person name="Mohseni M."/>
            <person name="Puettmann L."/>
            <person name="Vahid L.N."/>
            <person name="Jensen C."/>
            <person name="Moheb L.A."/>
            <person name="Bienek M."/>
            <person name="Larti F."/>
            <person name="Mueller I."/>
            <person name="Weissmann R."/>
            <person name="Darvish H."/>
            <person name="Wrogemann K."/>
            <person name="Hadavi V."/>
            <person name="Lipkowitz B."/>
            <person name="Esmaeeli-Nieh S."/>
            <person name="Wieczorek D."/>
            <person name="Kariminejad R."/>
            <person name="Firouzabadi S.G."/>
            <person name="Cohen M."/>
            <person name="Fattahi Z."/>
            <person name="Rost I."/>
            <person name="Mojahedi F."/>
            <person name="Hertzberg C."/>
            <person name="Dehghan A."/>
            <person name="Rajab A."/>
            <person name="Banavandi M.J."/>
            <person name="Hoffer J."/>
            <person name="Falah M."/>
            <person name="Musante L."/>
            <person name="Kalscheuer V."/>
            <person name="Ullmann R."/>
            <person name="Kuss A.W."/>
            <person name="Tzschach A."/>
            <person name="Kahrizi K."/>
            <person name="Ropers H.H."/>
        </authorList>
    </citation>
    <scope>VARIANT NEDFCF ARG-649</scope>
</reference>
<reference key="13">
    <citation type="journal article" date="2013" name="Pediatr. Neurol.">
        <title>Microcephaly thin corpus callosum intellectual disability syndrome caused by mutated TAF2.</title>
        <authorList>
            <person name="Hellman-Aharony S."/>
            <person name="Smirin-Yosef P."/>
            <person name="Halevy A."/>
            <person name="Pasmanik-Chor M."/>
            <person name="Yeheskel A."/>
            <person name="Har-Zahav A."/>
            <person name="Maya I."/>
            <person name="Straussberg R."/>
            <person name="Dahary D."/>
            <person name="Haviv A."/>
            <person name="Shohat M."/>
            <person name="Basel-Vanagaite L."/>
        </authorList>
    </citation>
    <scope>VARIANTS NEDFCF ARG-186 AND HIS-416</scope>
</reference>
<feature type="chain" id="PRO_0000252424" description="Transcription initiation factor TFIID subunit 2">
    <location>
        <begin position="1"/>
        <end position="1199"/>
    </location>
</feature>
<feature type="region of interest" description="Disordered" evidence="1">
    <location>
        <begin position="1"/>
        <end position="23"/>
    </location>
</feature>
<feature type="region of interest" description="Disordered" evidence="1">
    <location>
        <begin position="1067"/>
        <end position="1102"/>
    </location>
</feature>
<feature type="region of interest" description="Disordered" evidence="1">
    <location>
        <begin position="1136"/>
        <end position="1199"/>
    </location>
</feature>
<feature type="compositionally biased region" description="Polar residues" evidence="1">
    <location>
        <begin position="1093"/>
        <end position="1102"/>
    </location>
</feature>
<feature type="compositionally biased region" description="Basic residues" evidence="1">
    <location>
        <begin position="1144"/>
        <end position="1171"/>
    </location>
</feature>
<feature type="compositionally biased region" description="Polar residues" evidence="1">
    <location>
        <begin position="1182"/>
        <end position="1199"/>
    </location>
</feature>
<feature type="modified residue" description="Phosphoserine" evidence="22 23">
    <location>
        <position position="1185"/>
    </location>
</feature>
<feature type="modified residue" description="Phosphoserine" evidence="22 23">
    <location>
        <position position="1188"/>
    </location>
</feature>
<feature type="modified residue" description="Phosphoserine" evidence="21">
    <location>
        <position position="1194"/>
    </location>
</feature>
<feature type="modified residue" description="Phosphoserine" evidence="21">
    <location>
        <position position="1196"/>
    </location>
</feature>
<feature type="modified residue" description="Phosphoserine" evidence="21">
    <location>
        <position position="1198"/>
    </location>
</feature>
<feature type="sequence variant" id="VAR_027854" description="In dbSNP:rs17818842.">
    <original>P</original>
    <variation>L</variation>
    <location>
        <position position="8"/>
    </location>
</feature>
<feature type="sequence variant" id="VAR_070945" description="In NEDFCF; uncertain significance; dbSNP:rs398124656." evidence="5">
    <original>T</original>
    <variation>R</variation>
    <location>
        <position position="186"/>
    </location>
</feature>
<feature type="sequence variant" id="VAR_070946" description="In NEDFCF; uncertain significance; dbSNP:rs398124655." evidence="5">
    <original>P</original>
    <variation>H</variation>
    <location>
        <position position="416"/>
    </location>
</feature>
<feature type="sequence variant" id="VAR_027855" description="In dbSNP:rs9297605." evidence="3 7 8 9">
    <original>S</original>
    <variation>T</variation>
    <location>
        <position position="447"/>
    </location>
</feature>
<feature type="sequence variant" id="VAR_070947" description="In NEDFCF; dbSNP:rs398124645." evidence="4">
    <original>W</original>
    <variation>R</variation>
    <location>
        <position position="649"/>
    </location>
</feature>
<feature type="sequence variant" id="VAR_057263" description="In dbSNP:rs34154779.">
    <original>E</original>
    <variation>K</variation>
    <location>
        <position position="686"/>
    </location>
</feature>
<feature type="sequence variant" id="VAR_027856" description="In dbSNP:rs956749.">
    <original>S</original>
    <variation>N</variation>
    <location>
        <position position="1122"/>
    </location>
</feature>
<feature type="sequence variant" id="VAR_027857" description="In dbSNP:rs956748.">
    <original>T</original>
    <variation>A</variation>
    <location>
        <position position="1139"/>
    </location>
</feature>
<feature type="sequence conflict" description="In Ref. 2; AAC68502." evidence="10" ref="2">
    <original>M</original>
    <variation>R</variation>
    <location>
        <position position="1"/>
    </location>
</feature>
<feature type="sequence conflict" description="In Ref. 1; AAC02966." evidence="10" ref="1">
    <original>Q</original>
    <variation>H</variation>
    <location>
        <position position="41"/>
    </location>
</feature>
<feature type="sequence conflict" description="In Ref. 6; AAH47732." evidence="10" ref="6">
    <original>P</original>
    <variation>L</variation>
    <location>
        <position position="131"/>
    </location>
</feature>
<feature type="sequence conflict" description="In Ref. 6; AAH64830." evidence="10" ref="6">
    <original>G</original>
    <variation>C</variation>
    <location>
        <position position="158"/>
    </location>
</feature>
<feature type="sequence conflict" description="In Ref. 6; AAH35673/AAH47732." evidence="10" ref="6">
    <original>I</original>
    <variation>K</variation>
    <location>
        <position position="604"/>
    </location>
</feature>
<feature type="sequence conflict" description="In Ref. 2; AAC68502." evidence="10" ref="2">
    <original>R</original>
    <variation>G</variation>
    <location>
        <position position="785"/>
    </location>
</feature>
<feature type="strand" evidence="24">
    <location>
        <begin position="23"/>
        <end position="39"/>
    </location>
</feature>
<feature type="turn" evidence="24">
    <location>
        <begin position="40"/>
        <end position="43"/>
    </location>
</feature>
<feature type="strand" evidence="24">
    <location>
        <begin position="44"/>
        <end position="58"/>
    </location>
</feature>
<feature type="strand" evidence="24">
    <location>
        <begin position="63"/>
        <end position="66"/>
    </location>
</feature>
<feature type="strand" evidence="24">
    <location>
        <begin position="71"/>
        <end position="77"/>
    </location>
</feature>
<feature type="strand" evidence="24">
    <location>
        <begin position="83"/>
        <end position="86"/>
    </location>
</feature>
<feature type="strand" evidence="24">
    <location>
        <begin position="91"/>
        <end position="94"/>
    </location>
</feature>
<feature type="helix" evidence="24">
    <location>
        <begin position="103"/>
        <end position="116"/>
    </location>
</feature>
<feature type="turn" evidence="24">
    <location>
        <begin position="119"/>
        <end position="122"/>
    </location>
</feature>
<feature type="strand" evidence="24">
    <location>
        <begin position="125"/>
        <end position="129"/>
    </location>
</feature>
<feature type="helix" evidence="24">
    <location>
        <begin position="132"/>
        <end position="134"/>
    </location>
</feature>
<feature type="helix" evidence="24">
    <location>
        <begin position="135"/>
        <end position="138"/>
    </location>
</feature>
<feature type="turn" evidence="24">
    <location>
        <begin position="139"/>
        <end position="141"/>
    </location>
</feature>
<feature type="strand" evidence="24">
    <location>
        <begin position="144"/>
        <end position="154"/>
    </location>
</feature>
<feature type="strand" evidence="24">
    <location>
        <begin position="156"/>
        <end position="162"/>
    </location>
</feature>
<feature type="helix" evidence="24">
    <location>
        <begin position="170"/>
        <end position="173"/>
    </location>
</feature>
<feature type="strand" evidence="24">
    <location>
        <begin position="176"/>
        <end position="179"/>
    </location>
</feature>
<feature type="strand" evidence="24">
    <location>
        <begin position="182"/>
        <end position="184"/>
    </location>
</feature>
<feature type="helix" evidence="24">
    <location>
        <begin position="186"/>
        <end position="188"/>
    </location>
</feature>
<feature type="strand" evidence="24">
    <location>
        <begin position="200"/>
        <end position="209"/>
    </location>
</feature>
<feature type="strand" evidence="24">
    <location>
        <begin position="213"/>
        <end position="225"/>
    </location>
</feature>
<feature type="strand" evidence="24">
    <location>
        <begin position="229"/>
        <end position="242"/>
    </location>
</feature>
<feature type="helix" evidence="24">
    <location>
        <begin position="244"/>
        <end position="246"/>
    </location>
</feature>
<feature type="strand" evidence="24">
    <location>
        <begin position="249"/>
        <end position="252"/>
    </location>
</feature>
<feature type="strand" evidence="24">
    <location>
        <begin position="255"/>
        <end position="258"/>
    </location>
</feature>
<feature type="strand" evidence="24">
    <location>
        <begin position="260"/>
        <end position="269"/>
    </location>
</feature>
<feature type="helix" evidence="24">
    <location>
        <begin position="274"/>
        <end position="280"/>
    </location>
</feature>
<feature type="helix" evidence="24">
    <location>
        <begin position="284"/>
        <end position="294"/>
    </location>
</feature>
<feature type="strand" evidence="24">
    <location>
        <begin position="295"/>
        <end position="297"/>
    </location>
</feature>
<feature type="strand" evidence="24">
    <location>
        <begin position="300"/>
        <end position="302"/>
    </location>
</feature>
<feature type="strand" evidence="24">
    <location>
        <begin position="304"/>
        <end position="311"/>
    </location>
</feature>
<feature type="strand" evidence="24">
    <location>
        <begin position="313"/>
        <end position="319"/>
    </location>
</feature>
<feature type="strand" evidence="24">
    <location>
        <begin position="322"/>
        <end position="326"/>
    </location>
</feature>
<feature type="helix" evidence="24">
    <location>
        <begin position="327"/>
        <end position="329"/>
    </location>
</feature>
<feature type="helix" evidence="24">
    <location>
        <begin position="339"/>
        <end position="355"/>
    </location>
</feature>
<feature type="turn" evidence="24">
    <location>
        <begin position="356"/>
        <end position="358"/>
    </location>
</feature>
<feature type="strand" evidence="24">
    <location>
        <begin position="359"/>
        <end position="364"/>
    </location>
</feature>
<feature type="helix" evidence="24">
    <location>
        <begin position="367"/>
        <end position="408"/>
    </location>
</feature>
<feature type="strand" evidence="24">
    <location>
        <begin position="430"/>
        <end position="433"/>
    </location>
</feature>
<feature type="strand" evidence="24">
    <location>
        <begin position="435"/>
        <end position="437"/>
    </location>
</feature>
<feature type="helix" evidence="24">
    <location>
        <begin position="438"/>
        <end position="440"/>
    </location>
</feature>
<feature type="helix" evidence="24">
    <location>
        <begin position="443"/>
        <end position="463"/>
    </location>
</feature>
<feature type="helix" evidence="24">
    <location>
        <begin position="466"/>
        <end position="483"/>
    </location>
</feature>
<feature type="strand" evidence="24">
    <location>
        <begin position="488"/>
        <end position="492"/>
    </location>
</feature>
<feature type="helix" evidence="24">
    <location>
        <begin position="493"/>
        <end position="495"/>
    </location>
</feature>
<feature type="strand" evidence="24">
    <location>
        <begin position="496"/>
        <end position="498"/>
    </location>
</feature>
<feature type="helix" evidence="24">
    <location>
        <begin position="500"/>
        <end position="511"/>
    </location>
</feature>
<feature type="helix" evidence="24">
    <location>
        <begin position="516"/>
        <end position="522"/>
    </location>
</feature>
<feature type="turn" evidence="24">
    <location>
        <begin position="523"/>
        <end position="525"/>
    </location>
</feature>
<feature type="strand" evidence="24">
    <location>
        <begin position="528"/>
        <end position="538"/>
    </location>
</feature>
<feature type="turn" evidence="24">
    <location>
        <begin position="539"/>
        <end position="542"/>
    </location>
</feature>
<feature type="strand" evidence="24">
    <location>
        <begin position="543"/>
        <end position="550"/>
    </location>
</feature>
<feature type="strand" evidence="24">
    <location>
        <begin position="562"/>
        <end position="570"/>
    </location>
</feature>
<feature type="strand" evidence="24">
    <location>
        <begin position="573"/>
        <end position="580"/>
    </location>
</feature>
<feature type="strand" evidence="24">
    <location>
        <begin position="587"/>
        <end position="591"/>
    </location>
</feature>
<feature type="helix" evidence="24">
    <location>
        <begin position="596"/>
        <end position="599"/>
    </location>
</feature>
<feature type="strand" evidence="24">
    <location>
        <begin position="607"/>
        <end position="609"/>
    </location>
</feature>
<feature type="strand" evidence="24">
    <location>
        <begin position="625"/>
        <end position="631"/>
    </location>
</feature>
<feature type="strand" evidence="24">
    <location>
        <begin position="636"/>
        <end position="643"/>
    </location>
</feature>
<feature type="helix" evidence="24">
    <location>
        <begin position="646"/>
        <end position="655"/>
    </location>
</feature>
<feature type="helix" evidence="24">
    <location>
        <begin position="659"/>
        <end position="668"/>
    </location>
</feature>
<feature type="helix" evidence="24">
    <location>
        <begin position="669"/>
        <end position="671"/>
    </location>
</feature>
<feature type="helix" evidence="24">
    <location>
        <begin position="675"/>
        <end position="685"/>
    </location>
</feature>
<feature type="helix" evidence="24">
    <location>
        <begin position="692"/>
        <end position="708"/>
    </location>
</feature>
<feature type="turn" evidence="24">
    <location>
        <begin position="709"/>
        <end position="712"/>
    </location>
</feature>
<feature type="helix" evidence="24">
    <location>
        <begin position="720"/>
        <end position="727"/>
    </location>
</feature>
<feature type="strand" evidence="24">
    <location>
        <begin position="733"/>
        <end position="736"/>
    </location>
</feature>
<feature type="strand" evidence="24">
    <location>
        <begin position="743"/>
        <end position="745"/>
    </location>
</feature>
<feature type="helix" evidence="24">
    <location>
        <begin position="746"/>
        <end position="757"/>
    </location>
</feature>
<feature type="helix" evidence="24">
    <location>
        <begin position="769"/>
        <end position="780"/>
    </location>
</feature>
<feature type="strand" evidence="24">
    <location>
        <begin position="785"/>
        <end position="789"/>
    </location>
</feature>
<feature type="helix" evidence="24">
    <location>
        <begin position="792"/>
        <end position="804"/>
    </location>
</feature>
<feature type="helix" evidence="24">
    <location>
        <begin position="824"/>
        <end position="842"/>
    </location>
</feature>
<feature type="strand" evidence="24">
    <location>
        <begin position="846"/>
        <end position="848"/>
    </location>
</feature>
<feature type="helix" evidence="24">
    <location>
        <begin position="849"/>
        <end position="863"/>
    </location>
</feature>
<feature type="helix" evidence="24">
    <location>
        <begin position="872"/>
        <end position="877"/>
    </location>
</feature>
<feature type="helix" evidence="24">
    <location>
        <begin position="884"/>
        <end position="900"/>
    </location>
</feature>
<feature type="helix" evidence="24">
    <location>
        <begin position="904"/>
        <end position="915"/>
    </location>
</feature>
<feature type="helix" evidence="24">
    <location>
        <begin position="920"/>
        <end position="932"/>
    </location>
</feature>
<feature type="helix" evidence="24">
    <location>
        <begin position="947"/>
        <end position="958"/>
    </location>
</feature>
<feature type="turn" evidence="24">
    <location>
        <begin position="962"/>
        <end position="964"/>
    </location>
</feature>
<feature type="helix" evidence="24">
    <location>
        <begin position="967"/>
        <end position="979"/>
    </location>
</feature>
<protein>
    <recommendedName>
        <fullName>Transcription initiation factor TFIID subunit 2</fullName>
    </recommendedName>
    <alternativeName>
        <fullName>150 kDa cofactor of initiator function</fullName>
    </alternativeName>
    <alternativeName>
        <fullName>RNA polymerase II TBP-associated factor subunit B</fullName>
    </alternativeName>
    <alternativeName>
        <fullName>TBP-associated factor 150 kDa</fullName>
    </alternativeName>
    <alternativeName>
        <fullName>Transcription initiation factor TFIID 150 kDa subunit</fullName>
        <shortName>TAF(II)150</shortName>
        <shortName>TAFII-150</shortName>
        <shortName>TAFII150</shortName>
    </alternativeName>
</protein>
<accession>Q6P1X5</accession>
<accession>B2RE82</accession>
<accession>O43487</accession>
<accession>O43604</accession>
<accession>O60668</accession>
<accession>Q86WW7</accession>
<accession>Q8IWK4</accession>
<sequence>MPLTGVEPARMNRKKGDKGFESPRPYKLTHQVVCINNINFQRKSVVGFVELTIFPTVANLNRIKLNSKQCRIYRVRINDLEAAFIYNDPTLEVCHSESKQRNLNYFSNAYAAAVSAVDPDAGNGELCIKVPSELWKHVDELKVLKIHINFSLDQPKGGLHFVVPSVEGSMAERGAHVFSCGYQNSTRFWFPCVDSYSELCTWKLEFTVDAAMVAVSNGDLVETVYTHDMRKKTFHYMLTIPTAASNISLAIGPFEILVDPYMHEVTHFCLPQLLPLLKHTTSYLHEVFEFYEEILTCRYPYSCFKTVFIDEAYVEVAAYASMSIFSTNLLHSAMIIDETPLTRRCLAQSLAQQFFGCFISRMSWSDEWVLKGISGYIYGLWMKKTFGVNEYRHWIKEELDKIVAYELKTGGVLLHPIFGGGKEKDNPASHLHFSIKHPHTLSWEYYSMFQCKAHLVMRLIENRISMEFMLQVFNKLLSLASTASSQKFQSHMWSQMLVSTSGFLKSISNVSGKDIQPLIKQWVDQSGVVKFYGSFAFNRKRNVLELEIKQDYTSPGTQKYVGPLKVTVQELDGSFNHTLQIEENSLKHDIPCHSKSRRNKKKKIPLMNGEEVDMDLSAMDADSPLLWIRIDPDMSVLRKVEFEQADFMWQYQLRYERDVVAQQESILALEKFPTPASRLALTDILEQEQCFYRVRMSACFCLAKIANSMVSTWTGPPAMKSLFTRMFCCKSCPNIVKTNNFMSFQSYFLQKTMPVAMALLRDVHNLCPKEVLTFILDLIKYNDNRKNKFSDNYYRAEMIDALANSVTPAVSVNNEVRTLDNLNPDVRLILEEITRFLNMEKLLPSYRHTITVSCLRAIRVLQKNGHVPSDPALFKSYAEYGHFVDIRIAALEAVVDYTKVDRSYEELQWLLNMIQNDPVPYVRHKILNMLTKNPPFTKNMESPLCNEALVDQLWKLMNSGTSHDWRLRCGAVDLYFTLFGLSRPSCLPLPELGLVLNLKEKKAVLNPTIIPESVAGNQEAANNPSSHPQLVGFQNPFSSSQDEEEIDMDTVHDSQAFISHHLNMLERPSTPGLSKYRPASSRSALIPQHSAGCDSTPTTKPQWSLELARKGTGKEQAPLEMSMHPAASAPLSVFTKESTASKHSDHHHHHHHEHKKKKKKHKHKHKHKHKHDSKEKDKEPFTFSSPASGRSIRSPSLSD</sequence>
<organism>
    <name type="scientific">Homo sapiens</name>
    <name type="common">Human</name>
    <dbReference type="NCBI Taxonomy" id="9606"/>
    <lineage>
        <taxon>Eukaryota</taxon>
        <taxon>Metazoa</taxon>
        <taxon>Chordata</taxon>
        <taxon>Craniata</taxon>
        <taxon>Vertebrata</taxon>
        <taxon>Euteleostomi</taxon>
        <taxon>Mammalia</taxon>
        <taxon>Eutheria</taxon>
        <taxon>Euarchontoglires</taxon>
        <taxon>Primates</taxon>
        <taxon>Haplorrhini</taxon>
        <taxon>Catarrhini</taxon>
        <taxon>Hominidae</taxon>
        <taxon>Homo</taxon>
    </lineage>
</organism>
<evidence type="ECO:0000256" key="1">
    <source>
        <dbReference type="SAM" id="MobiDB-lite"/>
    </source>
</evidence>
<evidence type="ECO:0000269" key="2">
    <source>
    </source>
</evidence>
<evidence type="ECO:0000269" key="3">
    <source>
    </source>
</evidence>
<evidence type="ECO:0000269" key="4">
    <source>
    </source>
</evidence>
<evidence type="ECO:0000269" key="5">
    <source>
    </source>
</evidence>
<evidence type="ECO:0000269" key="6">
    <source>
    </source>
</evidence>
<evidence type="ECO:0000269" key="7">
    <source>
    </source>
</evidence>
<evidence type="ECO:0000269" key="8">
    <source>
    </source>
</evidence>
<evidence type="ECO:0000269" key="9">
    <source ref="3"/>
</evidence>
<evidence type="ECO:0000305" key="10"/>
<evidence type="ECO:0007744" key="11">
    <source>
        <dbReference type="PDB" id="7EDX"/>
    </source>
</evidence>
<evidence type="ECO:0007744" key="12">
    <source>
        <dbReference type="PDB" id="7EG7"/>
    </source>
</evidence>
<evidence type="ECO:0007744" key="13">
    <source>
        <dbReference type="PDB" id="7EG8"/>
    </source>
</evidence>
<evidence type="ECO:0007744" key="14">
    <source>
        <dbReference type="PDB" id="7EG9"/>
    </source>
</evidence>
<evidence type="ECO:0007744" key="15">
    <source>
        <dbReference type="PDB" id="7EGA"/>
    </source>
</evidence>
<evidence type="ECO:0007744" key="16">
    <source>
        <dbReference type="PDB" id="7EGB"/>
    </source>
</evidence>
<evidence type="ECO:0007744" key="17">
    <source>
        <dbReference type="PDB" id="7EGC"/>
    </source>
</evidence>
<evidence type="ECO:0007744" key="18">
    <source>
        <dbReference type="PDB" id="7EGD"/>
    </source>
</evidence>
<evidence type="ECO:0007744" key="19">
    <source>
        <dbReference type="PDB" id="7EGE"/>
    </source>
</evidence>
<evidence type="ECO:0007744" key="20">
    <source>
        <dbReference type="PDB" id="7EGH"/>
    </source>
</evidence>
<evidence type="ECO:0007744" key="21">
    <source>
    </source>
</evidence>
<evidence type="ECO:0007744" key="22">
    <source>
    </source>
</evidence>
<evidence type="ECO:0007744" key="23">
    <source>
    </source>
</evidence>
<evidence type="ECO:0007829" key="24">
    <source>
        <dbReference type="PDB" id="7EGH"/>
    </source>
</evidence>
<dbReference type="EMBL" id="AF026445">
    <property type="protein sequence ID" value="AAC02966.1"/>
    <property type="molecule type" value="mRNA"/>
</dbReference>
<dbReference type="EMBL" id="AF040701">
    <property type="protein sequence ID" value="AAC68502.1"/>
    <property type="status" value="ALT_INIT"/>
    <property type="molecule type" value="mRNA"/>
</dbReference>
<dbReference type="EMBL" id="AF057694">
    <property type="protein sequence ID" value="AAC13540.1"/>
    <property type="molecule type" value="mRNA"/>
</dbReference>
<dbReference type="EMBL" id="AK316592">
    <property type="protein sequence ID" value="BAG38179.1"/>
    <property type="molecule type" value="mRNA"/>
</dbReference>
<dbReference type="EMBL" id="AC107960">
    <property type="status" value="NOT_ANNOTATED_CDS"/>
    <property type="molecule type" value="Genomic_DNA"/>
</dbReference>
<dbReference type="EMBL" id="AC021945">
    <property type="status" value="NOT_ANNOTATED_CDS"/>
    <property type="molecule type" value="Genomic_DNA"/>
</dbReference>
<dbReference type="EMBL" id="BC035673">
    <property type="protein sequence ID" value="AAH35673.1"/>
    <property type="molecule type" value="mRNA"/>
</dbReference>
<dbReference type="EMBL" id="BC047732">
    <property type="protein sequence ID" value="AAH47732.1"/>
    <property type="molecule type" value="mRNA"/>
</dbReference>
<dbReference type="EMBL" id="BC064830">
    <property type="protein sequence ID" value="AAH64830.1"/>
    <property type="status" value="ALT_SEQ"/>
    <property type="molecule type" value="mRNA"/>
</dbReference>
<dbReference type="CCDS" id="CCDS34937.1"/>
<dbReference type="RefSeq" id="NP_003175.2">
    <property type="nucleotide sequence ID" value="NM_003184.4"/>
</dbReference>
<dbReference type="PDB" id="5FUR">
    <property type="method" value="EM"/>
    <property type="resolution" value="8.50 A"/>
    <property type="chains" value="I=1-1199"/>
</dbReference>
<dbReference type="PDB" id="6MZC">
    <property type="method" value="EM"/>
    <property type="resolution" value="4.50 A"/>
    <property type="chains" value="B=1-1199"/>
</dbReference>
<dbReference type="PDB" id="6MZL">
    <property type="method" value="EM"/>
    <property type="resolution" value="23.00 A"/>
    <property type="chains" value="B=1-1199"/>
</dbReference>
<dbReference type="PDB" id="6MZM">
    <property type="method" value="EM"/>
    <property type="resolution" value="7.50 A"/>
    <property type="chains" value="B=1-1199"/>
</dbReference>
<dbReference type="PDB" id="7EDX">
    <property type="method" value="EM"/>
    <property type="resolution" value="4.50 A"/>
    <property type="chains" value="B=1-1199"/>
</dbReference>
<dbReference type="PDB" id="7EG7">
    <property type="method" value="EM"/>
    <property type="resolution" value="6.20 A"/>
    <property type="chains" value="B=1-1199"/>
</dbReference>
<dbReference type="PDB" id="7EG8">
    <property type="method" value="EM"/>
    <property type="resolution" value="7.40 A"/>
    <property type="chains" value="B=1-1199"/>
</dbReference>
<dbReference type="PDB" id="7EG9">
    <property type="method" value="EM"/>
    <property type="resolution" value="3.70 A"/>
    <property type="chains" value="B=1-1199"/>
</dbReference>
<dbReference type="PDB" id="7EGA">
    <property type="method" value="EM"/>
    <property type="resolution" value="4.10 A"/>
    <property type="chains" value="B=1-1199"/>
</dbReference>
<dbReference type="PDB" id="7EGB">
    <property type="method" value="EM"/>
    <property type="resolution" value="3.30 A"/>
    <property type="chains" value="B=1-1199"/>
</dbReference>
<dbReference type="PDB" id="7EGC">
    <property type="method" value="EM"/>
    <property type="resolution" value="3.90 A"/>
    <property type="chains" value="B=1-1199"/>
</dbReference>
<dbReference type="PDB" id="7EGD">
    <property type="method" value="EM"/>
    <property type="resolution" value="6.75 A"/>
    <property type="chains" value="B=1-1199"/>
</dbReference>
<dbReference type="PDB" id="7EGE">
    <property type="method" value="EM"/>
    <property type="resolution" value="9.00 A"/>
    <property type="chains" value="B=1-1199"/>
</dbReference>
<dbReference type="PDB" id="7EGH">
    <property type="method" value="EM"/>
    <property type="resolution" value="3.04 A"/>
    <property type="chains" value="B=1-1199"/>
</dbReference>
<dbReference type="PDB" id="7EGI">
    <property type="method" value="EM"/>
    <property type="resolution" value="9.82 A"/>
    <property type="chains" value="B=1-1199"/>
</dbReference>
<dbReference type="PDB" id="7EGJ">
    <property type="method" value="EM"/>
    <property type="resolution" value="8.64 A"/>
    <property type="chains" value="B=1-1199"/>
</dbReference>
<dbReference type="PDB" id="7ENA">
    <property type="method" value="EM"/>
    <property type="resolution" value="4.07 A"/>
    <property type="chains" value="DB=1-1199"/>
</dbReference>
<dbReference type="PDB" id="7ENC">
    <property type="method" value="EM"/>
    <property type="resolution" value="4.13 A"/>
    <property type="chains" value="DB=1-1199"/>
</dbReference>
<dbReference type="PDB" id="8GXQ">
    <property type="method" value="EM"/>
    <property type="resolution" value="5.04 A"/>
    <property type="chains" value="DB=1-1199"/>
</dbReference>
<dbReference type="PDB" id="8GXS">
    <property type="method" value="EM"/>
    <property type="resolution" value="4.16 A"/>
    <property type="chains" value="DB=1-1199"/>
</dbReference>
<dbReference type="PDB" id="8WAK">
    <property type="method" value="EM"/>
    <property type="resolution" value="5.47 A"/>
    <property type="chains" value="B=1-1199"/>
</dbReference>
<dbReference type="PDB" id="8WAL">
    <property type="method" value="EM"/>
    <property type="resolution" value="8.52 A"/>
    <property type="chains" value="B=1-1199"/>
</dbReference>
<dbReference type="PDB" id="8WAN">
    <property type="method" value="EM"/>
    <property type="resolution" value="6.07 A"/>
    <property type="chains" value="B=1-1199"/>
</dbReference>
<dbReference type="PDB" id="8WAO">
    <property type="method" value="EM"/>
    <property type="resolution" value="6.40 A"/>
    <property type="chains" value="B=1-1199"/>
</dbReference>
<dbReference type="PDB" id="8WAP">
    <property type="method" value="EM"/>
    <property type="resolution" value="5.85 A"/>
    <property type="chains" value="B=1-1199"/>
</dbReference>
<dbReference type="PDB" id="8WAQ">
    <property type="method" value="EM"/>
    <property type="resolution" value="6.29 A"/>
    <property type="chains" value="B=1-1199"/>
</dbReference>
<dbReference type="PDB" id="8WAR">
    <property type="method" value="EM"/>
    <property type="resolution" value="7.20 A"/>
    <property type="chains" value="B=1-1199"/>
</dbReference>
<dbReference type="PDB" id="8WAS">
    <property type="method" value="EM"/>
    <property type="resolution" value="6.13 A"/>
    <property type="chains" value="B=1-1199"/>
</dbReference>
<dbReference type="PDBsum" id="5FUR"/>
<dbReference type="PDBsum" id="6MZC"/>
<dbReference type="PDBsum" id="6MZL"/>
<dbReference type="PDBsum" id="6MZM"/>
<dbReference type="PDBsum" id="7EDX"/>
<dbReference type="PDBsum" id="7EG7"/>
<dbReference type="PDBsum" id="7EG8"/>
<dbReference type="PDBsum" id="7EG9"/>
<dbReference type="PDBsum" id="7EGA"/>
<dbReference type="PDBsum" id="7EGB"/>
<dbReference type="PDBsum" id="7EGC"/>
<dbReference type="PDBsum" id="7EGD"/>
<dbReference type="PDBsum" id="7EGE"/>
<dbReference type="PDBsum" id="7EGH"/>
<dbReference type="PDBsum" id="7EGI"/>
<dbReference type="PDBsum" id="7EGJ"/>
<dbReference type="PDBsum" id="7ENA"/>
<dbReference type="PDBsum" id="7ENC"/>
<dbReference type="PDBsum" id="8GXQ"/>
<dbReference type="PDBsum" id="8GXS"/>
<dbReference type="PDBsum" id="8WAK"/>
<dbReference type="PDBsum" id="8WAL"/>
<dbReference type="PDBsum" id="8WAN"/>
<dbReference type="PDBsum" id="8WAO"/>
<dbReference type="PDBsum" id="8WAP"/>
<dbReference type="PDBsum" id="8WAQ"/>
<dbReference type="PDBsum" id="8WAR"/>
<dbReference type="PDBsum" id="8WAS"/>
<dbReference type="EMDB" id="EMD-31075"/>
<dbReference type="EMDB" id="EMD-31107"/>
<dbReference type="EMDB" id="EMD-31108"/>
<dbReference type="EMDB" id="EMD-31109"/>
<dbReference type="EMDB" id="EMD-31110"/>
<dbReference type="EMDB" id="EMD-31111"/>
<dbReference type="EMDB" id="EMD-31112"/>
<dbReference type="EMDB" id="EMD-31113"/>
<dbReference type="EMDB" id="EMD-31114"/>
<dbReference type="EMDB" id="EMD-31117"/>
<dbReference type="EMDB" id="EMD-31118"/>
<dbReference type="EMDB" id="EMD-31119"/>
<dbReference type="EMDB" id="EMD-31204"/>
<dbReference type="EMDB" id="EMD-31207"/>
<dbReference type="EMDB" id="EMD-34359"/>
<dbReference type="EMDB" id="EMD-34360"/>
<dbReference type="EMDB" id="EMD-37395"/>
<dbReference type="EMDB" id="EMD-37396"/>
<dbReference type="EMDB" id="EMD-37398"/>
<dbReference type="EMDB" id="EMD-37399"/>
<dbReference type="EMDB" id="EMD-37400"/>
<dbReference type="EMDB" id="EMD-37401"/>
<dbReference type="EMDB" id="EMD-37402"/>
<dbReference type="EMDB" id="EMD-37403"/>
<dbReference type="EMDB" id="EMD-9298"/>
<dbReference type="EMDB" id="EMD-9305"/>
<dbReference type="EMDB" id="EMD-9306"/>
<dbReference type="SMR" id="Q6P1X5"/>
<dbReference type="BioGRID" id="112736">
    <property type="interactions" value="188"/>
</dbReference>
<dbReference type="ComplexPortal" id="CPX-903">
    <property type="entry name" value="TFTC histone acetylation complex"/>
</dbReference>
<dbReference type="ComplexPortal" id="CPX-915">
    <property type="entry name" value="General transcription factor complex TFIID"/>
</dbReference>
<dbReference type="ComplexPortal" id="CPX-930">
    <property type="entry name" value="General transcription factor complex TFIID, TAF4B variant"/>
</dbReference>
<dbReference type="CORUM" id="Q6P1X5"/>
<dbReference type="DIP" id="DIP-38921N"/>
<dbReference type="FunCoup" id="Q6P1X5">
    <property type="interactions" value="3517"/>
</dbReference>
<dbReference type="IntAct" id="Q6P1X5">
    <property type="interactions" value="43"/>
</dbReference>
<dbReference type="MINT" id="Q6P1X5"/>
<dbReference type="STRING" id="9606.ENSP00000367406"/>
<dbReference type="MEROPS" id="M01.972"/>
<dbReference type="GlyGen" id="Q6P1X5">
    <property type="glycosylation" value="4 sites, 1 O-linked glycan (2 sites)"/>
</dbReference>
<dbReference type="iPTMnet" id="Q6P1X5"/>
<dbReference type="PhosphoSitePlus" id="Q6P1X5"/>
<dbReference type="BioMuta" id="TAF2"/>
<dbReference type="DMDM" id="145559533"/>
<dbReference type="jPOST" id="Q6P1X5"/>
<dbReference type="MassIVE" id="Q6P1X5"/>
<dbReference type="PaxDb" id="9606-ENSP00000367406"/>
<dbReference type="PeptideAtlas" id="Q6P1X5"/>
<dbReference type="ProteomicsDB" id="66877"/>
<dbReference type="Pumba" id="Q6P1X5"/>
<dbReference type="Antibodypedia" id="26803">
    <property type="antibodies" value="161 antibodies from 21 providers"/>
</dbReference>
<dbReference type="DNASU" id="6873"/>
<dbReference type="Ensembl" id="ENST00000378164.7">
    <property type="protein sequence ID" value="ENSP00000367406.2"/>
    <property type="gene ID" value="ENSG00000064313.13"/>
</dbReference>
<dbReference type="GeneID" id="6873"/>
<dbReference type="KEGG" id="hsa:6873"/>
<dbReference type="MANE-Select" id="ENST00000378164.7">
    <property type="protein sequence ID" value="ENSP00000367406.2"/>
    <property type="RefSeq nucleotide sequence ID" value="NM_003184.4"/>
    <property type="RefSeq protein sequence ID" value="NP_003175.2"/>
</dbReference>
<dbReference type="UCSC" id="uc003you.4">
    <property type="organism name" value="human"/>
</dbReference>
<dbReference type="AGR" id="HGNC:11536"/>
<dbReference type="CTD" id="6873"/>
<dbReference type="DisGeNET" id="6873"/>
<dbReference type="GeneCards" id="TAF2"/>
<dbReference type="HGNC" id="HGNC:11536">
    <property type="gene designation" value="TAF2"/>
</dbReference>
<dbReference type="HPA" id="ENSG00000064313">
    <property type="expression patterns" value="Low tissue specificity"/>
</dbReference>
<dbReference type="MalaCards" id="TAF2"/>
<dbReference type="MIM" id="604912">
    <property type="type" value="gene"/>
</dbReference>
<dbReference type="MIM" id="615599">
    <property type="type" value="phenotype"/>
</dbReference>
<dbReference type="neXtProt" id="NX_Q6P1X5"/>
<dbReference type="OpenTargets" id="ENSG00000064313"/>
<dbReference type="Orphanet" id="397951">
    <property type="disease" value="Microcephaly-thin corpus callosum-intellectual disability syndrome"/>
</dbReference>
<dbReference type="PharmGKB" id="PA36311"/>
<dbReference type="VEuPathDB" id="HostDB:ENSG00000064313"/>
<dbReference type="eggNOG" id="KOG1932">
    <property type="taxonomic scope" value="Eukaryota"/>
</dbReference>
<dbReference type="GeneTree" id="ENSGT00390000000420"/>
<dbReference type="HOGENOM" id="CLU_002317_0_0_1"/>
<dbReference type="InParanoid" id="Q6P1X5"/>
<dbReference type="OMA" id="EQPDYQW"/>
<dbReference type="OrthoDB" id="308861at2759"/>
<dbReference type="PAN-GO" id="Q6P1X5">
    <property type="GO annotations" value="5 GO annotations based on evolutionary models"/>
</dbReference>
<dbReference type="PhylomeDB" id="Q6P1X5"/>
<dbReference type="TreeFam" id="TF315208"/>
<dbReference type="PathwayCommons" id="Q6P1X5"/>
<dbReference type="Reactome" id="R-HSA-167161">
    <property type="pathway name" value="HIV Transcription Initiation"/>
</dbReference>
<dbReference type="Reactome" id="R-HSA-167162">
    <property type="pathway name" value="RNA Polymerase II HIV Promoter Escape"/>
</dbReference>
<dbReference type="Reactome" id="R-HSA-167172">
    <property type="pathway name" value="Transcription of the HIV genome"/>
</dbReference>
<dbReference type="Reactome" id="R-HSA-674695">
    <property type="pathway name" value="RNA Polymerase II Pre-transcription Events"/>
</dbReference>
<dbReference type="Reactome" id="R-HSA-6804756">
    <property type="pathway name" value="Regulation of TP53 Activity through Phosphorylation"/>
</dbReference>
<dbReference type="Reactome" id="R-HSA-73776">
    <property type="pathway name" value="RNA Polymerase II Promoter Escape"/>
</dbReference>
<dbReference type="Reactome" id="R-HSA-73779">
    <property type="pathway name" value="RNA Polymerase II Transcription Pre-Initiation And Promoter Opening"/>
</dbReference>
<dbReference type="Reactome" id="R-HSA-75953">
    <property type="pathway name" value="RNA Polymerase II Transcription Initiation"/>
</dbReference>
<dbReference type="Reactome" id="R-HSA-76042">
    <property type="pathway name" value="RNA Polymerase II Transcription Initiation And Promoter Clearance"/>
</dbReference>
<dbReference type="SignaLink" id="Q6P1X5"/>
<dbReference type="SIGNOR" id="Q6P1X5"/>
<dbReference type="BioGRID-ORCS" id="6873">
    <property type="hits" value="572 hits in 1183 CRISPR screens"/>
</dbReference>
<dbReference type="ChiTaRS" id="TAF2">
    <property type="organism name" value="human"/>
</dbReference>
<dbReference type="GeneWiki" id="TAF2"/>
<dbReference type="GenomeRNAi" id="6873"/>
<dbReference type="Pharos" id="Q6P1X5">
    <property type="development level" value="Tbio"/>
</dbReference>
<dbReference type="PRO" id="PR:Q6P1X5"/>
<dbReference type="Proteomes" id="UP000005640">
    <property type="component" value="Chromosome 8"/>
</dbReference>
<dbReference type="RNAct" id="Q6P1X5">
    <property type="molecule type" value="protein"/>
</dbReference>
<dbReference type="Bgee" id="ENSG00000064313">
    <property type="expression patterns" value="Expressed in adrenal tissue and 209 other cell types or tissues"/>
</dbReference>
<dbReference type="ExpressionAtlas" id="Q6P1X5">
    <property type="expression patterns" value="baseline and differential"/>
</dbReference>
<dbReference type="GO" id="GO:0005654">
    <property type="term" value="C:nucleoplasm"/>
    <property type="evidence" value="ECO:0000304"/>
    <property type="project" value="Reactome"/>
</dbReference>
<dbReference type="GO" id="GO:0005634">
    <property type="term" value="C:nucleus"/>
    <property type="evidence" value="ECO:0000269"/>
    <property type="project" value="ComplexPortal"/>
</dbReference>
<dbReference type="GO" id="GO:0005669">
    <property type="term" value="C:transcription factor TFIID complex"/>
    <property type="evidence" value="ECO:0000314"/>
    <property type="project" value="UniProtKB"/>
</dbReference>
<dbReference type="GO" id="GO:0033276">
    <property type="term" value="C:transcription factor TFTC complex"/>
    <property type="evidence" value="ECO:0000314"/>
    <property type="project" value="UniProtKB"/>
</dbReference>
<dbReference type="GO" id="GO:0003682">
    <property type="term" value="F:chromatin binding"/>
    <property type="evidence" value="ECO:0000318"/>
    <property type="project" value="GO_Central"/>
</dbReference>
<dbReference type="GO" id="GO:0016251">
    <property type="term" value="F:RNA polymerase II general transcription initiation factor activity"/>
    <property type="evidence" value="ECO:0000305"/>
    <property type="project" value="ARUK-UCL"/>
</dbReference>
<dbReference type="GO" id="GO:0000976">
    <property type="term" value="F:transcription cis-regulatory region binding"/>
    <property type="evidence" value="ECO:0000315"/>
    <property type="project" value="UniProtKB"/>
</dbReference>
<dbReference type="GO" id="GO:0000086">
    <property type="term" value="P:G2/M transition of mitotic cell cycle"/>
    <property type="evidence" value="ECO:0000315"/>
    <property type="project" value="UniProtKB"/>
</dbReference>
<dbReference type="GO" id="GO:0042789">
    <property type="term" value="P:mRNA transcription by RNA polymerase II"/>
    <property type="evidence" value="ECO:0000314"/>
    <property type="project" value="ComplexPortal"/>
</dbReference>
<dbReference type="GO" id="GO:0045893">
    <property type="term" value="P:positive regulation of DNA-templated transcription"/>
    <property type="evidence" value="ECO:0000303"/>
    <property type="project" value="ComplexPortal"/>
</dbReference>
<dbReference type="GO" id="GO:0060261">
    <property type="term" value="P:positive regulation of transcription initiation by RNA polymerase II"/>
    <property type="evidence" value="ECO:0000314"/>
    <property type="project" value="ComplexPortal"/>
</dbReference>
<dbReference type="GO" id="GO:0006282">
    <property type="term" value="P:regulation of DNA repair"/>
    <property type="evidence" value="ECO:0000303"/>
    <property type="project" value="ComplexPortal"/>
</dbReference>
<dbReference type="GO" id="GO:0006357">
    <property type="term" value="P:regulation of transcription by RNA polymerase II"/>
    <property type="evidence" value="ECO:0000314"/>
    <property type="project" value="ComplexPortal"/>
</dbReference>
<dbReference type="GO" id="GO:0051123">
    <property type="term" value="P:RNA polymerase II preinitiation complex assembly"/>
    <property type="evidence" value="ECO:0000353"/>
    <property type="project" value="ComplexPortal"/>
</dbReference>
<dbReference type="GO" id="GO:0006367">
    <property type="term" value="P:transcription initiation at RNA polymerase II promoter"/>
    <property type="evidence" value="ECO:0000314"/>
    <property type="project" value="UniProtKB"/>
</dbReference>
<dbReference type="CDD" id="cd09839">
    <property type="entry name" value="M1_like_TAF2"/>
    <property type="match status" value="1"/>
</dbReference>
<dbReference type="FunFam" id="2.60.40.1730:FF:000003">
    <property type="entry name" value="Transcription initiation factor TFIID subunit 2"/>
    <property type="match status" value="1"/>
</dbReference>
<dbReference type="FunFam" id="1.10.390.10:FF:000005">
    <property type="entry name" value="transcription initiation factor TFIID subunit 2 isoform X1"/>
    <property type="match status" value="1"/>
</dbReference>
<dbReference type="Gene3D" id="1.10.390.10">
    <property type="entry name" value="Neutral Protease Domain 2"/>
    <property type="match status" value="1"/>
</dbReference>
<dbReference type="Gene3D" id="2.60.40.1730">
    <property type="entry name" value="tricorn interacting facor f3 domain"/>
    <property type="match status" value="1"/>
</dbReference>
<dbReference type="InterPro" id="IPR042097">
    <property type="entry name" value="Aminopeptidase_N-like_N_sf"/>
</dbReference>
<dbReference type="InterPro" id="IPR016024">
    <property type="entry name" value="ARM-type_fold"/>
</dbReference>
<dbReference type="InterPro" id="IPR027268">
    <property type="entry name" value="Peptidase_M4/M1_CTD_sf"/>
</dbReference>
<dbReference type="InterPro" id="IPR037813">
    <property type="entry name" value="TAF2"/>
</dbReference>
<dbReference type="PANTHER" id="PTHR15137">
    <property type="entry name" value="TRANSCRIPTION INITIATION FACTOR TFIID"/>
    <property type="match status" value="1"/>
</dbReference>
<dbReference type="PANTHER" id="PTHR15137:SF9">
    <property type="entry name" value="TRANSCRIPTION INITIATION FACTOR TFIID SUBUNIT 2"/>
    <property type="match status" value="1"/>
</dbReference>
<dbReference type="Pfam" id="PF25316">
    <property type="entry name" value="TAF2_3rd"/>
    <property type="match status" value="1"/>
</dbReference>
<dbReference type="SUPFAM" id="SSF48371">
    <property type="entry name" value="ARM repeat"/>
    <property type="match status" value="1"/>
</dbReference>
<dbReference type="SUPFAM" id="SSF63737">
    <property type="entry name" value="Leukotriene A4 hydrolase N-terminal domain"/>
    <property type="match status" value="1"/>
</dbReference>
<dbReference type="SUPFAM" id="SSF55486">
    <property type="entry name" value="Metalloproteases ('zincins'), catalytic domain"/>
    <property type="match status" value="1"/>
</dbReference>
<gene>
    <name type="primary">TAF2</name>
    <name type="synonym">CIF150</name>
    <name type="synonym">TAF2B</name>
</gene>
<proteinExistence type="evidence at protein level"/>